<accession>A1SZZ9</accession>
<proteinExistence type="inferred from homology"/>
<evidence type="ECO:0000255" key="1">
    <source>
        <dbReference type="HAMAP-Rule" id="MF_00167"/>
    </source>
</evidence>
<dbReference type="EMBL" id="CP000510">
    <property type="protein sequence ID" value="ABM05064.1"/>
    <property type="molecule type" value="Genomic_DNA"/>
</dbReference>
<dbReference type="RefSeq" id="WP_011771616.1">
    <property type="nucleotide sequence ID" value="NC_008709.1"/>
</dbReference>
<dbReference type="SMR" id="A1SZZ9"/>
<dbReference type="STRING" id="357804.Ping_3378"/>
<dbReference type="KEGG" id="pin:Ping_3378"/>
<dbReference type="eggNOG" id="COG1551">
    <property type="taxonomic scope" value="Bacteria"/>
</dbReference>
<dbReference type="HOGENOM" id="CLU_164837_2_1_6"/>
<dbReference type="OrthoDB" id="9809061at2"/>
<dbReference type="Proteomes" id="UP000000639">
    <property type="component" value="Chromosome"/>
</dbReference>
<dbReference type="GO" id="GO:0005829">
    <property type="term" value="C:cytosol"/>
    <property type="evidence" value="ECO:0007669"/>
    <property type="project" value="TreeGrafter"/>
</dbReference>
<dbReference type="GO" id="GO:0048027">
    <property type="term" value="F:mRNA 5'-UTR binding"/>
    <property type="evidence" value="ECO:0007669"/>
    <property type="project" value="UniProtKB-UniRule"/>
</dbReference>
<dbReference type="GO" id="GO:0006402">
    <property type="term" value="P:mRNA catabolic process"/>
    <property type="evidence" value="ECO:0007669"/>
    <property type="project" value="InterPro"/>
</dbReference>
<dbReference type="GO" id="GO:0045947">
    <property type="term" value="P:negative regulation of translational initiation"/>
    <property type="evidence" value="ECO:0007669"/>
    <property type="project" value="UniProtKB-UniRule"/>
</dbReference>
<dbReference type="GO" id="GO:0045948">
    <property type="term" value="P:positive regulation of translational initiation"/>
    <property type="evidence" value="ECO:0007669"/>
    <property type="project" value="UniProtKB-UniRule"/>
</dbReference>
<dbReference type="GO" id="GO:0006109">
    <property type="term" value="P:regulation of carbohydrate metabolic process"/>
    <property type="evidence" value="ECO:0007669"/>
    <property type="project" value="UniProtKB-UniRule"/>
</dbReference>
<dbReference type="FunFam" id="2.60.40.4380:FF:000001">
    <property type="entry name" value="Translational regulator CsrA"/>
    <property type="match status" value="1"/>
</dbReference>
<dbReference type="Gene3D" id="2.60.40.4380">
    <property type="entry name" value="Translational regulator CsrA"/>
    <property type="match status" value="1"/>
</dbReference>
<dbReference type="HAMAP" id="MF_00167">
    <property type="entry name" value="CsrA"/>
    <property type="match status" value="1"/>
</dbReference>
<dbReference type="InterPro" id="IPR003751">
    <property type="entry name" value="CsrA"/>
</dbReference>
<dbReference type="InterPro" id="IPR036107">
    <property type="entry name" value="CsrA_sf"/>
</dbReference>
<dbReference type="NCBIfam" id="TIGR00202">
    <property type="entry name" value="csrA"/>
    <property type="match status" value="1"/>
</dbReference>
<dbReference type="NCBIfam" id="NF002469">
    <property type="entry name" value="PRK01712.1"/>
    <property type="match status" value="1"/>
</dbReference>
<dbReference type="PANTHER" id="PTHR34984">
    <property type="entry name" value="CARBON STORAGE REGULATOR"/>
    <property type="match status" value="1"/>
</dbReference>
<dbReference type="PANTHER" id="PTHR34984:SF1">
    <property type="entry name" value="CARBON STORAGE REGULATOR"/>
    <property type="match status" value="1"/>
</dbReference>
<dbReference type="Pfam" id="PF02599">
    <property type="entry name" value="CsrA"/>
    <property type="match status" value="1"/>
</dbReference>
<dbReference type="SUPFAM" id="SSF117130">
    <property type="entry name" value="CsrA-like"/>
    <property type="match status" value="1"/>
</dbReference>
<gene>
    <name evidence="1" type="primary">csrA</name>
    <name type="ordered locus">Ping_3378</name>
</gene>
<organism>
    <name type="scientific">Psychromonas ingrahamii (strain DSM 17664 / CCUG 51855 / 37)</name>
    <dbReference type="NCBI Taxonomy" id="357804"/>
    <lineage>
        <taxon>Bacteria</taxon>
        <taxon>Pseudomonadati</taxon>
        <taxon>Pseudomonadota</taxon>
        <taxon>Gammaproteobacteria</taxon>
        <taxon>Alteromonadales</taxon>
        <taxon>Psychromonadaceae</taxon>
        <taxon>Psychromonas</taxon>
    </lineage>
</organism>
<keyword id="KW-0010">Activator</keyword>
<keyword id="KW-0963">Cytoplasm</keyword>
<keyword id="KW-1185">Reference proteome</keyword>
<keyword id="KW-0678">Repressor</keyword>
<keyword id="KW-0694">RNA-binding</keyword>
<keyword id="KW-0810">Translation regulation</keyword>
<sequence>MLILTRRVGETLMIGDNVTVTVLGVKGNQVRIGVNAPKEVSVHREEIYMRIQAEKSGE</sequence>
<reference key="1">
    <citation type="journal article" date="2008" name="BMC Genomics">
        <title>Genomics of an extreme psychrophile, Psychromonas ingrahamii.</title>
        <authorList>
            <person name="Riley M."/>
            <person name="Staley J.T."/>
            <person name="Danchin A."/>
            <person name="Wang T.Z."/>
            <person name="Brettin T.S."/>
            <person name="Hauser L.J."/>
            <person name="Land M.L."/>
            <person name="Thompson L.S."/>
        </authorList>
    </citation>
    <scope>NUCLEOTIDE SEQUENCE [LARGE SCALE GENOMIC DNA]</scope>
    <source>
        <strain>DSM 17664 / CCUG 51855 / 37</strain>
    </source>
</reference>
<feature type="chain" id="PRO_1000023411" description="Translational regulator CsrA">
    <location>
        <begin position="1"/>
        <end position="58"/>
    </location>
</feature>
<comment type="function">
    <text evidence="1">A key translational regulator that binds mRNA to regulate translation initiation and/or mRNA stability. Mediates global changes in gene expression, shifting from rapid growth to stress survival by linking envelope stress, the stringent response and the catabolite repression systems. Usually binds in the 5'-UTR; binding at or near the Shine-Dalgarno sequence prevents ribosome-binding, repressing translation, binding elsewhere in the 5'-UTR can activate translation and/or stabilize the mRNA. Its function is antagonized by small RNA(s).</text>
</comment>
<comment type="subunit">
    <text evidence="1">Homodimer; the beta-strands of each monomer intercalate to form a hydrophobic core, while the alpha-helices form wings that extend away from the core.</text>
</comment>
<comment type="subcellular location">
    <subcellularLocation>
        <location evidence="1">Cytoplasm</location>
    </subcellularLocation>
</comment>
<comment type="similarity">
    <text evidence="1">Belongs to the CsrA/RsmA family.</text>
</comment>
<protein>
    <recommendedName>
        <fullName evidence="1">Translational regulator CsrA</fullName>
    </recommendedName>
    <alternativeName>
        <fullName evidence="1">Carbon storage regulator</fullName>
    </alternativeName>
</protein>
<name>CSRA_PSYIN</name>